<keyword id="KW-0002">3D-structure</keyword>
<keyword id="KW-0963">Cytoplasm</keyword>
<keyword id="KW-0414">Isoprene biosynthesis</keyword>
<keyword id="KW-0460">Magnesium</keyword>
<keyword id="KW-0479">Metal-binding</keyword>
<keyword id="KW-1185">Reference proteome</keyword>
<keyword id="KW-0808">Transferase</keyword>
<protein>
    <recommendedName>
        <fullName>Farnesyl diphosphate synthase</fullName>
        <shortName>FPP synthase</shortName>
        <ecNumber>2.5.1.10</ecNumber>
    </recommendedName>
    <alternativeName>
        <fullName>(2E,6E)-farnesyl diphosphate synthase</fullName>
    </alternativeName>
    <alternativeName>
        <fullName>Geranyltranstransferase</fullName>
    </alternativeName>
</protein>
<gene>
    <name type="primary">ispA</name>
    <name type="ordered locus">b0421</name>
    <name type="ordered locus">JW0411</name>
</gene>
<feature type="chain" id="PRO_0000123982" description="Farnesyl diphosphate synthase">
    <location>
        <begin position="1"/>
        <end position="299"/>
    </location>
</feature>
<feature type="binding site" evidence="1">
    <location>
        <position position="45"/>
    </location>
    <ligand>
        <name>isopentenyl diphosphate</name>
        <dbReference type="ChEBI" id="CHEBI:128769"/>
    </ligand>
</feature>
<feature type="binding site" evidence="1">
    <location>
        <position position="48"/>
    </location>
    <ligand>
        <name>isopentenyl diphosphate</name>
        <dbReference type="ChEBI" id="CHEBI:128769"/>
    </ligand>
</feature>
<feature type="binding site" evidence="1">
    <location>
        <position position="77"/>
    </location>
    <ligand>
        <name>isopentenyl diphosphate</name>
        <dbReference type="ChEBI" id="CHEBI:128769"/>
    </ligand>
</feature>
<feature type="binding site" evidence="1">
    <location>
        <position position="84"/>
    </location>
    <ligand>
        <name>Mg(2+)</name>
        <dbReference type="ChEBI" id="CHEBI:18420"/>
        <label>1</label>
    </ligand>
</feature>
<feature type="binding site" evidence="1">
    <location>
        <position position="84"/>
    </location>
    <ligand>
        <name>Mg(2+)</name>
        <dbReference type="ChEBI" id="CHEBI:18420"/>
        <label>2</label>
    </ligand>
</feature>
<feature type="binding site" evidence="1">
    <location>
        <position position="90"/>
    </location>
    <ligand>
        <name>Mg(2+)</name>
        <dbReference type="ChEBI" id="CHEBI:18420"/>
        <label>1</label>
    </ligand>
</feature>
<feature type="binding site" evidence="1">
    <location>
        <position position="90"/>
    </location>
    <ligand>
        <name>Mg(2+)</name>
        <dbReference type="ChEBI" id="CHEBI:18420"/>
        <label>2</label>
    </ligand>
</feature>
<feature type="binding site">
    <location>
        <position position="95"/>
    </location>
    <ligand>
        <name>(2E)-geranyl diphosphate</name>
        <dbReference type="ChEBI" id="CHEBI:58057"/>
    </ligand>
</feature>
<feature type="binding site" evidence="1">
    <location>
        <position position="96"/>
    </location>
    <ligand>
        <name>isopentenyl diphosphate</name>
        <dbReference type="ChEBI" id="CHEBI:128769"/>
    </ligand>
</feature>
<feature type="binding site">
    <location>
        <position position="181"/>
    </location>
    <ligand>
        <name>(2E)-geranyl diphosphate</name>
        <dbReference type="ChEBI" id="CHEBI:58057"/>
    </ligand>
</feature>
<feature type="binding site">
    <location>
        <position position="182"/>
    </location>
    <ligand>
        <name>(2E)-geranyl diphosphate</name>
        <dbReference type="ChEBI" id="CHEBI:58057"/>
    </ligand>
</feature>
<feature type="binding site">
    <location>
        <position position="220"/>
    </location>
    <ligand>
        <name>(2E)-geranyl diphosphate</name>
        <dbReference type="ChEBI" id="CHEBI:58057"/>
    </ligand>
</feature>
<feature type="binding site">
    <location>
        <position position="237"/>
    </location>
    <ligand>
        <name>(2E)-geranyl diphosphate</name>
        <dbReference type="ChEBI" id="CHEBI:58057"/>
    </ligand>
</feature>
<feature type="helix" evidence="3">
    <location>
        <begin position="3"/>
        <end position="22"/>
    </location>
</feature>
<feature type="strand" evidence="3">
    <location>
        <begin position="25"/>
        <end position="27"/>
    </location>
</feature>
<feature type="helix" evidence="3">
    <location>
        <begin position="31"/>
        <end position="41"/>
    </location>
</feature>
<feature type="helix" evidence="3">
    <location>
        <begin position="47"/>
        <end position="58"/>
    </location>
</feature>
<feature type="helix" evidence="3">
    <location>
        <begin position="63"/>
        <end position="84"/>
    </location>
</feature>
<feature type="turn" evidence="3">
    <location>
        <begin position="87"/>
        <end position="90"/>
    </location>
</feature>
<feature type="helix" evidence="3">
    <location>
        <begin position="101"/>
        <end position="105"/>
    </location>
</feature>
<feature type="helix" evidence="3">
    <location>
        <begin position="107"/>
        <end position="127"/>
    </location>
</feature>
<feature type="helix" evidence="3">
    <location>
        <begin position="135"/>
        <end position="149"/>
    </location>
</feature>
<feature type="helix" evidence="3">
    <location>
        <begin position="154"/>
        <end position="163"/>
    </location>
</feature>
<feature type="turn" evidence="3">
    <location>
        <begin position="164"/>
        <end position="167"/>
    </location>
</feature>
<feature type="helix" evidence="3">
    <location>
        <begin position="171"/>
        <end position="181"/>
    </location>
</feature>
<feature type="helix" evidence="3">
    <location>
        <begin position="183"/>
        <end position="195"/>
    </location>
</feature>
<feature type="turn" evidence="3">
    <location>
        <begin position="196"/>
        <end position="198"/>
    </location>
</feature>
<feature type="helix" evidence="3">
    <location>
        <begin position="199"/>
        <end position="229"/>
    </location>
</feature>
<feature type="helix" evidence="3">
    <location>
        <begin position="232"/>
        <end position="235"/>
    </location>
</feature>
<feature type="helix" evidence="3">
    <location>
        <begin position="241"/>
        <end position="245"/>
    </location>
</feature>
<feature type="helix" evidence="3">
    <location>
        <begin position="250"/>
        <end position="254"/>
    </location>
</feature>
<feature type="helix" evidence="3">
    <location>
        <begin position="256"/>
        <end position="278"/>
    </location>
</feature>
<feature type="turn" evidence="3">
    <location>
        <begin position="279"/>
        <end position="281"/>
    </location>
</feature>
<feature type="helix" evidence="3">
    <location>
        <begin position="285"/>
        <end position="296"/>
    </location>
</feature>
<dbReference type="EC" id="2.5.1.10"/>
<dbReference type="EMBL" id="D00694">
    <property type="protein sequence ID" value="BAA00599.1"/>
    <property type="molecule type" value="Genomic_DNA"/>
</dbReference>
<dbReference type="EMBL" id="U82664">
    <property type="protein sequence ID" value="AAB40177.1"/>
    <property type="molecule type" value="Genomic_DNA"/>
</dbReference>
<dbReference type="EMBL" id="U00096">
    <property type="protein sequence ID" value="AAC73524.1"/>
    <property type="molecule type" value="Genomic_DNA"/>
</dbReference>
<dbReference type="EMBL" id="AP009048">
    <property type="protein sequence ID" value="BAE76201.1"/>
    <property type="molecule type" value="Genomic_DNA"/>
</dbReference>
<dbReference type="PIR" id="JQ0665">
    <property type="entry name" value="JQ0665"/>
</dbReference>
<dbReference type="RefSeq" id="NP_414955.1">
    <property type="nucleotide sequence ID" value="NC_000913.3"/>
</dbReference>
<dbReference type="RefSeq" id="WP_000347217.1">
    <property type="nucleotide sequence ID" value="NZ_SSZK01000009.1"/>
</dbReference>
<dbReference type="PDB" id="1RQI">
    <property type="method" value="X-ray"/>
    <property type="resolution" value="2.42 A"/>
    <property type="chains" value="A/B=1-299"/>
</dbReference>
<dbReference type="PDB" id="1RQJ">
    <property type="method" value="X-ray"/>
    <property type="resolution" value="1.95 A"/>
    <property type="chains" value="A/B=1-299"/>
</dbReference>
<dbReference type="PDBsum" id="1RQI"/>
<dbReference type="PDBsum" id="1RQJ"/>
<dbReference type="SMR" id="P22939"/>
<dbReference type="BioGRID" id="4259837">
    <property type="interactions" value="480"/>
</dbReference>
<dbReference type="BioGRID" id="849453">
    <property type="interactions" value="3"/>
</dbReference>
<dbReference type="DIP" id="DIP-10044N"/>
<dbReference type="FunCoup" id="P22939">
    <property type="interactions" value="454"/>
</dbReference>
<dbReference type="IntAct" id="P22939">
    <property type="interactions" value="16"/>
</dbReference>
<dbReference type="STRING" id="511145.b0421"/>
<dbReference type="BindingDB" id="P22939"/>
<dbReference type="ChEMBL" id="CHEMBL1075078"/>
<dbReference type="DrugBank" id="DB02270">
    <property type="generic name" value="Dimethylallyl S-Thiolodiphosphate"/>
</dbReference>
<dbReference type="DrugBank" id="DB02508">
    <property type="generic name" value="Isopentyl Pyrophosphate"/>
</dbReference>
<dbReference type="DrugBank" id="DB04160">
    <property type="generic name" value="Pyrophosphoric acid"/>
</dbReference>
<dbReference type="DrugCentral" id="P22939"/>
<dbReference type="jPOST" id="P22939"/>
<dbReference type="PaxDb" id="511145-b0421"/>
<dbReference type="EnsemblBacteria" id="AAC73524">
    <property type="protein sequence ID" value="AAC73524"/>
    <property type="gene ID" value="b0421"/>
</dbReference>
<dbReference type="GeneID" id="93777039"/>
<dbReference type="GeneID" id="945064"/>
<dbReference type="KEGG" id="ecj:JW0411"/>
<dbReference type="KEGG" id="eco:b0421"/>
<dbReference type="KEGG" id="ecoc:C3026_02055"/>
<dbReference type="PATRIC" id="fig|1411691.4.peg.1856"/>
<dbReference type="EchoBASE" id="EB0503"/>
<dbReference type="eggNOG" id="COG0142">
    <property type="taxonomic scope" value="Bacteria"/>
</dbReference>
<dbReference type="HOGENOM" id="CLU_014015_0_1_6"/>
<dbReference type="InParanoid" id="P22939"/>
<dbReference type="OMA" id="EGMIGGQ"/>
<dbReference type="OrthoDB" id="9805316at2"/>
<dbReference type="PhylomeDB" id="P22939"/>
<dbReference type="BioCyc" id="EcoCyc:FPPSYN-MONOMER"/>
<dbReference type="BioCyc" id="MetaCyc:FPPSYN-MONOMER"/>
<dbReference type="BRENDA" id="2.5.1.10">
    <property type="organism ID" value="2026"/>
</dbReference>
<dbReference type="SABIO-RK" id="P22939"/>
<dbReference type="EvolutionaryTrace" id="P22939"/>
<dbReference type="PRO" id="PR:P22939"/>
<dbReference type="Proteomes" id="UP000000625">
    <property type="component" value="Chromosome"/>
</dbReference>
<dbReference type="GO" id="GO:0005829">
    <property type="term" value="C:cytosol"/>
    <property type="evidence" value="ECO:0000314"/>
    <property type="project" value="EcoCyc"/>
</dbReference>
<dbReference type="GO" id="GO:0004337">
    <property type="term" value="F:(2E,6E)-farnesyl diphosphate synthase activity"/>
    <property type="evidence" value="ECO:0000314"/>
    <property type="project" value="EcoCyc"/>
</dbReference>
<dbReference type="GO" id="GO:0004161">
    <property type="term" value="F:dimethylallyltranstransferase activity"/>
    <property type="evidence" value="ECO:0000314"/>
    <property type="project" value="EcoCyc"/>
</dbReference>
<dbReference type="GO" id="GO:0046872">
    <property type="term" value="F:metal ion binding"/>
    <property type="evidence" value="ECO:0007669"/>
    <property type="project" value="UniProtKB-KW"/>
</dbReference>
<dbReference type="GO" id="GO:0004659">
    <property type="term" value="F:prenyltransferase activity"/>
    <property type="evidence" value="ECO:0000318"/>
    <property type="project" value="GO_Central"/>
</dbReference>
<dbReference type="GO" id="GO:0045337">
    <property type="term" value="P:farnesyl diphosphate biosynthetic process"/>
    <property type="evidence" value="ECO:0000315"/>
    <property type="project" value="EcoCyc"/>
</dbReference>
<dbReference type="GO" id="GO:0033384">
    <property type="term" value="P:geranyl diphosphate biosynthetic process"/>
    <property type="evidence" value="ECO:0000315"/>
    <property type="project" value="EcoCyc"/>
</dbReference>
<dbReference type="CDD" id="cd00685">
    <property type="entry name" value="Trans_IPPS_HT"/>
    <property type="match status" value="1"/>
</dbReference>
<dbReference type="FunFam" id="1.10.600.10:FF:000001">
    <property type="entry name" value="Geranylgeranyl diphosphate synthase"/>
    <property type="match status" value="1"/>
</dbReference>
<dbReference type="Gene3D" id="1.10.600.10">
    <property type="entry name" value="Farnesyl Diphosphate Synthase"/>
    <property type="match status" value="1"/>
</dbReference>
<dbReference type="InterPro" id="IPR008949">
    <property type="entry name" value="Isoprenoid_synthase_dom_sf"/>
</dbReference>
<dbReference type="InterPro" id="IPR000092">
    <property type="entry name" value="Polyprenyl_synt"/>
</dbReference>
<dbReference type="InterPro" id="IPR033749">
    <property type="entry name" value="Polyprenyl_synt_CS"/>
</dbReference>
<dbReference type="InterPro" id="IPR053378">
    <property type="entry name" value="Prenyl_diphosphate_synthase"/>
</dbReference>
<dbReference type="NCBIfam" id="NF045485">
    <property type="entry name" value="FPPsyn"/>
    <property type="match status" value="1"/>
</dbReference>
<dbReference type="NCBIfam" id="NF007877">
    <property type="entry name" value="PRK10581.1"/>
    <property type="match status" value="1"/>
</dbReference>
<dbReference type="PANTHER" id="PTHR43281">
    <property type="entry name" value="FARNESYL DIPHOSPHATE SYNTHASE"/>
    <property type="match status" value="1"/>
</dbReference>
<dbReference type="PANTHER" id="PTHR43281:SF1">
    <property type="entry name" value="FARNESYL DIPHOSPHATE SYNTHASE"/>
    <property type="match status" value="1"/>
</dbReference>
<dbReference type="Pfam" id="PF00348">
    <property type="entry name" value="polyprenyl_synt"/>
    <property type="match status" value="1"/>
</dbReference>
<dbReference type="SFLD" id="SFLDS00005">
    <property type="entry name" value="Isoprenoid_Synthase_Type_I"/>
    <property type="match status" value="1"/>
</dbReference>
<dbReference type="SFLD" id="SFLDG01017">
    <property type="entry name" value="Polyprenyl_Transferase_Like"/>
    <property type="match status" value="1"/>
</dbReference>
<dbReference type="SUPFAM" id="SSF48576">
    <property type="entry name" value="Terpenoid synthases"/>
    <property type="match status" value="1"/>
</dbReference>
<dbReference type="PROSITE" id="PS00723">
    <property type="entry name" value="POLYPRENYL_SYNTHASE_1"/>
    <property type="match status" value="1"/>
</dbReference>
<dbReference type="PROSITE" id="PS00444">
    <property type="entry name" value="POLYPRENYL_SYNTHASE_2"/>
    <property type="match status" value="1"/>
</dbReference>
<name>ISPA_ECOLI</name>
<accession>P22939</accession>
<accession>Q2MC05</accession>
<proteinExistence type="evidence at protein level"/>
<organism>
    <name type="scientific">Escherichia coli (strain K12)</name>
    <dbReference type="NCBI Taxonomy" id="83333"/>
    <lineage>
        <taxon>Bacteria</taxon>
        <taxon>Pseudomonadati</taxon>
        <taxon>Pseudomonadota</taxon>
        <taxon>Gammaproteobacteria</taxon>
        <taxon>Enterobacterales</taxon>
        <taxon>Enterobacteriaceae</taxon>
        <taxon>Escherichia</taxon>
    </lineage>
</organism>
<comment type="catalytic activity">
    <reaction>
        <text>isopentenyl diphosphate + (2E)-geranyl diphosphate = (2E,6E)-farnesyl diphosphate + diphosphate</text>
        <dbReference type="Rhea" id="RHEA:19361"/>
        <dbReference type="ChEBI" id="CHEBI:33019"/>
        <dbReference type="ChEBI" id="CHEBI:58057"/>
        <dbReference type="ChEBI" id="CHEBI:128769"/>
        <dbReference type="ChEBI" id="CHEBI:175763"/>
        <dbReference type="EC" id="2.5.1.10"/>
    </reaction>
</comment>
<comment type="cofactor">
    <cofactor evidence="1">
        <name>Mg(2+)</name>
        <dbReference type="ChEBI" id="CHEBI:18420"/>
    </cofactor>
    <text evidence="1">Binds 2 Mg(2+) ions per subunit.</text>
</comment>
<comment type="interaction">
    <interactant intactId="EBI-553011">
        <id>P22939</id>
    </interactant>
    <interactant intactId="EBI-553024">
        <id>P77609</id>
        <label>flxA</label>
    </interactant>
    <organismsDiffer>false</organismsDiffer>
    <experiments>6</experiments>
</comment>
<comment type="interaction">
    <interactant intactId="EBI-553011">
        <id>P22939</id>
    </interactant>
    <interactant intactId="EBI-553029">
        <id>P33221</id>
        <label>purT</label>
    </interactant>
    <organismsDiffer>false</organismsDiffer>
    <experiments>4</experiments>
</comment>
<comment type="subcellular location">
    <subcellularLocation>
        <location>Cytoplasm</location>
    </subcellularLocation>
</comment>
<comment type="similarity">
    <text evidence="2">Belongs to the FPP/GGPP synthase family.</text>
</comment>
<sequence>MDFPQQLEACVKQANQALSRFIAPLPFQNTPVVETMQYGALLGGKRLRPFLVYATGHMFGVSTNTLDAPAAAVECIHAYSLIHDDLPAMDDDDLRRGLPTCHVKFGEANAILAGDALQTLAFSILSDADMPEVSDRDRISMISELASASGIAGMCGGQALDLDAEGKHVPLDALERIHRHKTGALIRAAVRLGALSAGDKGRRALPVLDKYAESIGLAFQVQDDILDVVGDTATLGKRQGADQQLGKSTYPALLGLEQARKKARDLIDDARQSLKQLAEQSLDTSALEALADYIIQRNK</sequence>
<reference key="1">
    <citation type="journal article" date="1990" name="J. Biochem.">
        <title>Cloning and nucleotide sequence of the ispA gene responsible for farnesyl diphosphate synthase activity in Escherichia coli.</title>
        <authorList>
            <person name="Fujisaki S."/>
            <person name="Hara H."/>
            <person name="Nishimura Y."/>
            <person name="Horiuchi K."/>
            <person name="Nishino T."/>
        </authorList>
    </citation>
    <scope>NUCLEOTIDE SEQUENCE [GENOMIC DNA]</scope>
    <source>
        <strain>K12</strain>
    </source>
</reference>
<reference key="2">
    <citation type="submission" date="1997-01" db="EMBL/GenBank/DDBJ databases">
        <title>Sequence of minutes 4-25 of Escherichia coli.</title>
        <authorList>
            <person name="Chung E."/>
            <person name="Allen E."/>
            <person name="Araujo R."/>
            <person name="Aparicio A.M."/>
            <person name="Davis K."/>
            <person name="Duncan M."/>
            <person name="Federspiel N."/>
            <person name="Hyman R."/>
            <person name="Kalman S."/>
            <person name="Komp C."/>
            <person name="Kurdi O."/>
            <person name="Lew H."/>
            <person name="Lin D."/>
            <person name="Namath A."/>
            <person name="Oefner P."/>
            <person name="Roberts D."/>
            <person name="Schramm S."/>
            <person name="Davis R.W."/>
        </authorList>
    </citation>
    <scope>NUCLEOTIDE SEQUENCE [LARGE SCALE GENOMIC DNA]</scope>
    <source>
        <strain>K12 / MG1655 / ATCC 47076</strain>
    </source>
</reference>
<reference key="3">
    <citation type="journal article" date="1997" name="Science">
        <title>The complete genome sequence of Escherichia coli K-12.</title>
        <authorList>
            <person name="Blattner F.R."/>
            <person name="Plunkett G. III"/>
            <person name="Bloch C.A."/>
            <person name="Perna N.T."/>
            <person name="Burland V."/>
            <person name="Riley M."/>
            <person name="Collado-Vides J."/>
            <person name="Glasner J.D."/>
            <person name="Rode C.K."/>
            <person name="Mayhew G.F."/>
            <person name="Gregor J."/>
            <person name="Davis N.W."/>
            <person name="Kirkpatrick H.A."/>
            <person name="Goeden M.A."/>
            <person name="Rose D.J."/>
            <person name="Mau B."/>
            <person name="Shao Y."/>
        </authorList>
    </citation>
    <scope>NUCLEOTIDE SEQUENCE [LARGE SCALE GENOMIC DNA]</scope>
    <source>
        <strain>K12 / MG1655 / ATCC 47076</strain>
    </source>
</reference>
<reference key="4">
    <citation type="journal article" date="2006" name="Mol. Syst. Biol.">
        <title>Highly accurate genome sequences of Escherichia coli K-12 strains MG1655 and W3110.</title>
        <authorList>
            <person name="Hayashi K."/>
            <person name="Morooka N."/>
            <person name="Yamamoto Y."/>
            <person name="Fujita K."/>
            <person name="Isono K."/>
            <person name="Choi S."/>
            <person name="Ohtsubo E."/>
            <person name="Baba T."/>
            <person name="Wanner B.L."/>
            <person name="Mori H."/>
            <person name="Horiuchi T."/>
        </authorList>
    </citation>
    <scope>NUCLEOTIDE SEQUENCE [LARGE SCALE GENOMIC DNA]</scope>
    <source>
        <strain>K12 / W3110 / ATCC 27325 / DSM 5911</strain>
    </source>
</reference>
<reference key="5">
    <citation type="journal article" date="2004" name="J. Biol. Chem.">
        <title>Structural basis for bisphosphonate-mediated inhibition of isoprenoid biosynthesis.</title>
        <authorList>
            <person name="Hosfield D.J."/>
            <person name="Zhang Y."/>
            <person name="Dougan D.R."/>
            <person name="Broun A."/>
            <person name="Tari L.W."/>
            <person name="Swanson R.V."/>
            <person name="Finn J."/>
        </authorList>
    </citation>
    <scope>X-RAY CRYSTALLOGRAPHY (1.95 ANGSTROMS) IN COMPLEX WITH MAGNESIUM; ISOPENTENYL DIPHOSPHATE AND DIMETHYLALLYL S-THIOLODIPHOSPHATE</scope>
    <scope>SUBUNIT</scope>
    <scope>COFACTOR</scope>
</reference>
<evidence type="ECO:0000269" key="1">
    <source>
    </source>
</evidence>
<evidence type="ECO:0000305" key="2"/>
<evidence type="ECO:0007829" key="3">
    <source>
        <dbReference type="PDB" id="1RQJ"/>
    </source>
</evidence>